<evidence type="ECO:0000255" key="1">
    <source>
        <dbReference type="HAMAP-Rule" id="MF_01390"/>
    </source>
</evidence>
<evidence type="ECO:0000305" key="2"/>
<geneLocation type="chloroplast"/>
<gene>
    <name evidence="1" type="primary">matK</name>
    <name type="synonym">ycf14</name>
    <name type="ordered locus">AtCg00040</name>
</gene>
<proteinExistence type="inferred from homology"/>
<dbReference type="EMBL" id="AP000423">
    <property type="protein sequence ID" value="BAA84366.1"/>
    <property type="status" value="ALT_INIT"/>
    <property type="molecule type" value="Genomic_DNA"/>
</dbReference>
<dbReference type="EMBL" id="AF144348">
    <property type="protein sequence ID" value="AAG43317.1"/>
    <property type="molecule type" value="Genomic_DNA"/>
</dbReference>
<dbReference type="EMBL" id="AF144370">
    <property type="protein sequence ID" value="AAG43339.1"/>
    <property type="molecule type" value="Genomic_DNA"/>
</dbReference>
<dbReference type="EMBL" id="AF144371">
    <property type="protein sequence ID" value="AAG43340.1"/>
    <property type="molecule type" value="Genomic_DNA"/>
</dbReference>
<dbReference type="EMBL" id="AF144372">
    <property type="protein sequence ID" value="AAG43341.1"/>
    <property type="molecule type" value="Genomic_DNA"/>
</dbReference>
<dbReference type="EMBL" id="AF144373">
    <property type="protein sequence ID" value="AAG43342.1"/>
    <property type="molecule type" value="Genomic_DNA"/>
</dbReference>
<dbReference type="EMBL" id="AF144374">
    <property type="protein sequence ID" value="AAG43343.1"/>
    <property type="molecule type" value="Genomic_DNA"/>
</dbReference>
<dbReference type="EMBL" id="AF144375">
    <property type="protein sequence ID" value="AAG43344.1"/>
    <property type="molecule type" value="Genomic_DNA"/>
</dbReference>
<dbReference type="EMBL" id="AF144376">
    <property type="protein sequence ID" value="AAG43345.1"/>
    <property type="molecule type" value="Genomic_DNA"/>
</dbReference>
<dbReference type="EMBL" id="AF144377">
    <property type="protein sequence ID" value="AAG43346.1"/>
    <property type="molecule type" value="Genomic_DNA"/>
</dbReference>
<dbReference type="EMBL" id="AF144378">
    <property type="protein sequence ID" value="AAG43347.1"/>
    <property type="molecule type" value="Genomic_DNA"/>
</dbReference>
<dbReference type="RefSeq" id="NP_051040.2">
    <property type="nucleotide sequence ID" value="NC_000932.1"/>
</dbReference>
<dbReference type="STRING" id="3702.P56784"/>
<dbReference type="PaxDb" id="3702-ATCG00040.1"/>
<dbReference type="ProteomicsDB" id="239043"/>
<dbReference type="GeneID" id="844797"/>
<dbReference type="KEGG" id="ath:ArthCp003"/>
<dbReference type="Araport" id="ATCG00040"/>
<dbReference type="TAIR" id="ATCG00040"/>
<dbReference type="eggNOG" id="ENOG502QWRZ">
    <property type="taxonomic scope" value="Eukaryota"/>
</dbReference>
<dbReference type="HOGENOM" id="CLU_532556_0_0_1"/>
<dbReference type="InParanoid" id="P56784"/>
<dbReference type="PRO" id="PR:P56784"/>
<dbReference type="Proteomes" id="UP000006548">
    <property type="component" value="Chloroplast Pltd"/>
</dbReference>
<dbReference type="ExpressionAtlas" id="P56784">
    <property type="expression patterns" value="baseline and differential"/>
</dbReference>
<dbReference type="GO" id="GO:0009507">
    <property type="term" value="C:chloroplast"/>
    <property type="evidence" value="ECO:0007669"/>
    <property type="project" value="UniProtKB-SubCell"/>
</dbReference>
<dbReference type="GO" id="GO:0003723">
    <property type="term" value="F:RNA binding"/>
    <property type="evidence" value="ECO:0007669"/>
    <property type="project" value="UniProtKB-KW"/>
</dbReference>
<dbReference type="GO" id="GO:0006397">
    <property type="term" value="P:mRNA processing"/>
    <property type="evidence" value="ECO:0007669"/>
    <property type="project" value="UniProtKB-KW"/>
</dbReference>
<dbReference type="GO" id="GO:0008380">
    <property type="term" value="P:RNA splicing"/>
    <property type="evidence" value="ECO:0007669"/>
    <property type="project" value="UniProtKB-UniRule"/>
</dbReference>
<dbReference type="GO" id="GO:0008033">
    <property type="term" value="P:tRNA processing"/>
    <property type="evidence" value="ECO:0007669"/>
    <property type="project" value="UniProtKB-KW"/>
</dbReference>
<dbReference type="HAMAP" id="MF_01390">
    <property type="entry name" value="MatK"/>
    <property type="match status" value="1"/>
</dbReference>
<dbReference type="InterPro" id="IPR024937">
    <property type="entry name" value="Domain_X"/>
</dbReference>
<dbReference type="InterPro" id="IPR002866">
    <property type="entry name" value="Maturase_MatK"/>
</dbReference>
<dbReference type="InterPro" id="IPR024942">
    <property type="entry name" value="Maturase_MatK_N"/>
</dbReference>
<dbReference type="PANTHER" id="PTHR34811">
    <property type="entry name" value="MATURASE K"/>
    <property type="match status" value="1"/>
</dbReference>
<dbReference type="PANTHER" id="PTHR34811:SF1">
    <property type="entry name" value="MATURASE K"/>
    <property type="match status" value="1"/>
</dbReference>
<dbReference type="Pfam" id="PF01348">
    <property type="entry name" value="Intron_maturas2"/>
    <property type="match status" value="1"/>
</dbReference>
<dbReference type="Pfam" id="PF01824">
    <property type="entry name" value="MatK_N"/>
    <property type="match status" value="1"/>
</dbReference>
<comment type="function">
    <text evidence="1">Usually encoded in the trnK tRNA gene intron. Probably assists in splicing its own and other chloroplast group II introns.</text>
</comment>
<comment type="subcellular location">
    <subcellularLocation>
        <location>Plastid</location>
        <location>Chloroplast</location>
    </subcellularLocation>
</comment>
<comment type="similarity">
    <text evidence="1">Belongs to the intron maturase 2 family. MatK subfamily.</text>
</comment>
<comment type="sequence caution" evidence="2">
    <conflict type="erroneous initiation">
        <sequence resource="EMBL-CDS" id="BAA84366"/>
    </conflict>
    <text>Extended N-terminus.</text>
</comment>
<accession>P56784</accession>
<accession>Q9G1K9</accession>
<accession>Q9G227</accession>
<accession>Q9GF24</accession>
<accession>Q9GF25</accession>
<sequence>MDKFQGYLEFDGARQQSFLYPLFFREYIYVLAYDHGLNRLNRNRYIFLENADYDKKYSSLITKRLILRMYEQNRLIIPTKDVNQNSFLGHTSLFYYQMISVLFAVIVEIPFSLRLGSSFQGKQLKKSYNLQSIHSIFPFLEDKLGHFNYVLDVLIPYPIHLEILVQTLRYRVKDASSLHFFRFCLYEYCNWKNFYIKKKSILNPRFFLFLYNSHVCEYESIFFFLRKRSSHLRSTSYEVLFERIVFYGKIHHFFKVFVNNFPAILGLLKDPFIHYVRYHGRCILATKDTPLLMNKWKYYFVNLWQCYFSVWFQSQKVNINQLSKDNLEFLGYLSSLRLNPLVVRSQMLENSFLIDNVRIKLDSKIPISSIIGSLAKDKFCNVLGHPISKATWTDSSDSDILNRFVRICRNISHYYSGSSKKKNLYRIKYILRLCCVKTLARKHKSTVRTFLKRLGSGLLEEFLTGEDQVLSLIFPRSYYASKRLYRVRIWYLDILYLNDLVNHE</sequence>
<organism>
    <name type="scientific">Arabidopsis thaliana</name>
    <name type="common">Mouse-ear cress</name>
    <dbReference type="NCBI Taxonomy" id="3702"/>
    <lineage>
        <taxon>Eukaryota</taxon>
        <taxon>Viridiplantae</taxon>
        <taxon>Streptophyta</taxon>
        <taxon>Embryophyta</taxon>
        <taxon>Tracheophyta</taxon>
        <taxon>Spermatophyta</taxon>
        <taxon>Magnoliopsida</taxon>
        <taxon>eudicotyledons</taxon>
        <taxon>Gunneridae</taxon>
        <taxon>Pentapetalae</taxon>
        <taxon>rosids</taxon>
        <taxon>malvids</taxon>
        <taxon>Brassicales</taxon>
        <taxon>Brassicaceae</taxon>
        <taxon>Camelineae</taxon>
        <taxon>Arabidopsis</taxon>
    </lineage>
</organism>
<feature type="chain" id="PRO_0000143247" description="Maturase K">
    <location>
        <begin position="1"/>
        <end position="504"/>
    </location>
</feature>
<feature type="sequence variant" description="In strain: cv. Cvi-1.">
    <original>K</original>
    <variation>Q</variation>
    <location>
        <position position="3"/>
    </location>
</feature>
<feature type="sequence variant" description="In strain: cv. Per-1 and cv. Ser-1.">
    <original>F</original>
    <variation>L</variation>
    <location>
        <position position="119"/>
    </location>
</feature>
<feature type="sequence variant" description="In strain: cv. Ei-2.">
    <original>Y</original>
    <variation>F</variation>
    <location>
        <position position="496"/>
    </location>
</feature>
<protein>
    <recommendedName>
        <fullName evidence="1">Maturase K</fullName>
    </recommendedName>
    <alternativeName>
        <fullName evidence="1">Intron maturase</fullName>
    </alternativeName>
</protein>
<reference key="1">
    <citation type="journal article" date="1999" name="DNA Res.">
        <title>Complete structure of the chloroplast genome of Arabidopsis thaliana.</title>
        <authorList>
            <person name="Sato S."/>
            <person name="Nakamura Y."/>
            <person name="Kaneko T."/>
            <person name="Asamizu E."/>
            <person name="Tabata S."/>
        </authorList>
    </citation>
    <scope>NUCLEOTIDE SEQUENCE [LARGE SCALE GENOMIC DNA]</scope>
    <source>
        <strain>cv. Columbia</strain>
    </source>
</reference>
<reference key="2">
    <citation type="submission" date="1999-04" db="EMBL/GenBank/DDBJ databases">
        <title>Evolutionary analysis of plastidic maturase K and nuclear chalcone synthase and their utility for phylogenetic reconstructions within the Brassicaceae.</title>
        <authorList>
            <person name="Koch M."/>
            <person name="Mitchell-Olds T."/>
        </authorList>
    </citation>
    <scope>NUCLEOTIDE SEQUENCE [GENOMIC DNA]</scope>
    <source>
        <strain>cv. Cvi-1</strain>
        <strain>cv. Ei-2</strain>
        <strain>cv. Ka-0</strain>
        <strain>cv. Mrk-0</strain>
        <strain>cv. Nd-1</strain>
        <strain>cv. No-0</strain>
        <strain>cv. Per-1</strain>
        <strain>cv. Ser-1</strain>
        <strain>cv. Su-0</strain>
    </source>
</reference>
<name>MATK_ARATH</name>
<keyword id="KW-0150">Chloroplast</keyword>
<keyword id="KW-0507">mRNA processing</keyword>
<keyword id="KW-0934">Plastid</keyword>
<keyword id="KW-1185">Reference proteome</keyword>
<keyword id="KW-0694">RNA-binding</keyword>
<keyword id="KW-0819">tRNA processing</keyword>